<accession>Q6G793</accession>
<sequence length="72" mass="8280">MAKQDVIELEGTVLDTLPNAMFKVELENGHEILAHVSGKIRMNYIRILPGDKVTVEMSPYDLTRGRITYRYK</sequence>
<evidence type="ECO:0000255" key="1">
    <source>
        <dbReference type="HAMAP-Rule" id="MF_00075"/>
    </source>
</evidence>
<gene>
    <name evidence="1" type="primary">infA</name>
    <name type="ordered locus">SAS2119</name>
</gene>
<comment type="function">
    <text evidence="1">One of the essential components for the initiation of protein synthesis. Stabilizes the binding of IF-2 and IF-3 on the 30S subunit to which N-formylmethionyl-tRNA(fMet) subsequently binds. Helps modulate mRNA selection, yielding the 30S pre-initiation complex (PIC). Upon addition of the 50S ribosomal subunit IF-1, IF-2 and IF-3 are released leaving the mature 70S translation initiation complex.</text>
</comment>
<comment type="subunit">
    <text evidence="1">Component of the 30S ribosomal translation pre-initiation complex which assembles on the 30S ribosome in the order IF-2 and IF-3, IF-1 and N-formylmethionyl-tRNA(fMet); mRNA recruitment can occur at any time during PIC assembly.</text>
</comment>
<comment type="subcellular location">
    <subcellularLocation>
        <location evidence="1">Cytoplasm</location>
    </subcellularLocation>
</comment>
<comment type="similarity">
    <text evidence="1">Belongs to the IF-1 family.</text>
</comment>
<feature type="chain" id="PRO_0000095869" description="Translation initiation factor IF-1">
    <location>
        <begin position="1"/>
        <end position="72"/>
    </location>
</feature>
<feature type="domain" description="S1-like" evidence="1">
    <location>
        <begin position="1"/>
        <end position="72"/>
    </location>
</feature>
<keyword id="KW-0963">Cytoplasm</keyword>
<keyword id="KW-0396">Initiation factor</keyword>
<keyword id="KW-0648">Protein biosynthesis</keyword>
<keyword id="KW-0694">RNA-binding</keyword>
<keyword id="KW-0699">rRNA-binding</keyword>
<organism>
    <name type="scientific">Staphylococcus aureus (strain MSSA476)</name>
    <dbReference type="NCBI Taxonomy" id="282459"/>
    <lineage>
        <taxon>Bacteria</taxon>
        <taxon>Bacillati</taxon>
        <taxon>Bacillota</taxon>
        <taxon>Bacilli</taxon>
        <taxon>Bacillales</taxon>
        <taxon>Staphylococcaceae</taxon>
        <taxon>Staphylococcus</taxon>
    </lineage>
</organism>
<dbReference type="EMBL" id="BX571857">
    <property type="protein sequence ID" value="CAG43930.1"/>
    <property type="molecule type" value="Genomic_DNA"/>
</dbReference>
<dbReference type="RefSeq" id="WP_001118443.1">
    <property type="nucleotide sequence ID" value="NC_002953.3"/>
</dbReference>
<dbReference type="SMR" id="Q6G793"/>
<dbReference type="GeneID" id="98346540"/>
<dbReference type="KEGG" id="sas:SAS2119"/>
<dbReference type="HOGENOM" id="CLU_151267_1_0_9"/>
<dbReference type="GO" id="GO:0005829">
    <property type="term" value="C:cytosol"/>
    <property type="evidence" value="ECO:0007669"/>
    <property type="project" value="TreeGrafter"/>
</dbReference>
<dbReference type="GO" id="GO:0043022">
    <property type="term" value="F:ribosome binding"/>
    <property type="evidence" value="ECO:0007669"/>
    <property type="project" value="UniProtKB-UniRule"/>
</dbReference>
<dbReference type="GO" id="GO:0019843">
    <property type="term" value="F:rRNA binding"/>
    <property type="evidence" value="ECO:0007669"/>
    <property type="project" value="UniProtKB-UniRule"/>
</dbReference>
<dbReference type="GO" id="GO:0003743">
    <property type="term" value="F:translation initiation factor activity"/>
    <property type="evidence" value="ECO:0007669"/>
    <property type="project" value="UniProtKB-UniRule"/>
</dbReference>
<dbReference type="CDD" id="cd04451">
    <property type="entry name" value="S1_IF1"/>
    <property type="match status" value="1"/>
</dbReference>
<dbReference type="FunFam" id="2.40.50.140:FF:000002">
    <property type="entry name" value="Translation initiation factor IF-1"/>
    <property type="match status" value="1"/>
</dbReference>
<dbReference type="Gene3D" id="2.40.50.140">
    <property type="entry name" value="Nucleic acid-binding proteins"/>
    <property type="match status" value="1"/>
</dbReference>
<dbReference type="HAMAP" id="MF_00075">
    <property type="entry name" value="IF_1"/>
    <property type="match status" value="1"/>
</dbReference>
<dbReference type="InterPro" id="IPR012340">
    <property type="entry name" value="NA-bd_OB-fold"/>
</dbReference>
<dbReference type="InterPro" id="IPR006196">
    <property type="entry name" value="RNA-binding_domain_S1_IF1"/>
</dbReference>
<dbReference type="InterPro" id="IPR003029">
    <property type="entry name" value="S1_domain"/>
</dbReference>
<dbReference type="InterPro" id="IPR004368">
    <property type="entry name" value="TIF_IF1"/>
</dbReference>
<dbReference type="NCBIfam" id="TIGR00008">
    <property type="entry name" value="infA"/>
    <property type="match status" value="1"/>
</dbReference>
<dbReference type="PANTHER" id="PTHR33370">
    <property type="entry name" value="TRANSLATION INITIATION FACTOR IF-1, CHLOROPLASTIC"/>
    <property type="match status" value="1"/>
</dbReference>
<dbReference type="PANTHER" id="PTHR33370:SF1">
    <property type="entry name" value="TRANSLATION INITIATION FACTOR IF-1, CHLOROPLASTIC"/>
    <property type="match status" value="1"/>
</dbReference>
<dbReference type="Pfam" id="PF01176">
    <property type="entry name" value="eIF-1a"/>
    <property type="match status" value="1"/>
</dbReference>
<dbReference type="SMART" id="SM00316">
    <property type="entry name" value="S1"/>
    <property type="match status" value="1"/>
</dbReference>
<dbReference type="SUPFAM" id="SSF50249">
    <property type="entry name" value="Nucleic acid-binding proteins"/>
    <property type="match status" value="1"/>
</dbReference>
<dbReference type="PROSITE" id="PS50832">
    <property type="entry name" value="S1_IF1_TYPE"/>
    <property type="match status" value="1"/>
</dbReference>
<protein>
    <recommendedName>
        <fullName evidence="1">Translation initiation factor IF-1</fullName>
    </recommendedName>
</protein>
<reference key="1">
    <citation type="journal article" date="2004" name="Proc. Natl. Acad. Sci. U.S.A.">
        <title>Complete genomes of two clinical Staphylococcus aureus strains: evidence for the rapid evolution of virulence and drug resistance.</title>
        <authorList>
            <person name="Holden M.T.G."/>
            <person name="Feil E.J."/>
            <person name="Lindsay J.A."/>
            <person name="Peacock S.J."/>
            <person name="Day N.P.J."/>
            <person name="Enright M.C."/>
            <person name="Foster T.J."/>
            <person name="Moore C.E."/>
            <person name="Hurst L."/>
            <person name="Atkin R."/>
            <person name="Barron A."/>
            <person name="Bason N."/>
            <person name="Bentley S.D."/>
            <person name="Chillingworth C."/>
            <person name="Chillingworth T."/>
            <person name="Churcher C."/>
            <person name="Clark L."/>
            <person name="Corton C."/>
            <person name="Cronin A."/>
            <person name="Doggett J."/>
            <person name="Dowd L."/>
            <person name="Feltwell T."/>
            <person name="Hance Z."/>
            <person name="Harris B."/>
            <person name="Hauser H."/>
            <person name="Holroyd S."/>
            <person name="Jagels K."/>
            <person name="James K.D."/>
            <person name="Lennard N."/>
            <person name="Line A."/>
            <person name="Mayes R."/>
            <person name="Moule S."/>
            <person name="Mungall K."/>
            <person name="Ormond D."/>
            <person name="Quail M.A."/>
            <person name="Rabbinowitsch E."/>
            <person name="Rutherford K.M."/>
            <person name="Sanders M."/>
            <person name="Sharp S."/>
            <person name="Simmonds M."/>
            <person name="Stevens K."/>
            <person name="Whitehead S."/>
            <person name="Barrell B.G."/>
            <person name="Spratt B.G."/>
            <person name="Parkhill J."/>
        </authorList>
    </citation>
    <scope>NUCLEOTIDE SEQUENCE [LARGE SCALE GENOMIC DNA]</scope>
    <source>
        <strain>MSSA476</strain>
    </source>
</reference>
<proteinExistence type="inferred from homology"/>
<name>IF1_STAAS</name>